<gene>
    <name evidence="1" type="primary">upp</name>
    <name type="ordered locus">ABBFA_002849</name>
</gene>
<comment type="function">
    <text evidence="1">Catalyzes the conversion of uracil and 5-phospho-alpha-D-ribose 1-diphosphate (PRPP) to UMP and diphosphate.</text>
</comment>
<comment type="catalytic activity">
    <reaction evidence="1">
        <text>UMP + diphosphate = 5-phospho-alpha-D-ribose 1-diphosphate + uracil</text>
        <dbReference type="Rhea" id="RHEA:13017"/>
        <dbReference type="ChEBI" id="CHEBI:17568"/>
        <dbReference type="ChEBI" id="CHEBI:33019"/>
        <dbReference type="ChEBI" id="CHEBI:57865"/>
        <dbReference type="ChEBI" id="CHEBI:58017"/>
        <dbReference type="EC" id="2.4.2.9"/>
    </reaction>
</comment>
<comment type="cofactor">
    <cofactor evidence="1">
        <name>Mg(2+)</name>
        <dbReference type="ChEBI" id="CHEBI:18420"/>
    </cofactor>
    <text evidence="1">Binds 1 Mg(2+) ion per subunit. The magnesium is bound as Mg-PRPP.</text>
</comment>
<comment type="activity regulation">
    <text evidence="1">Allosterically activated by GTP.</text>
</comment>
<comment type="pathway">
    <text evidence="1">Pyrimidine metabolism; UMP biosynthesis via salvage pathway; UMP from uracil: step 1/1.</text>
</comment>
<comment type="similarity">
    <text evidence="1">Belongs to the UPRTase family.</text>
</comment>
<organism>
    <name type="scientific">Acinetobacter baumannii (strain AB307-0294)</name>
    <dbReference type="NCBI Taxonomy" id="557600"/>
    <lineage>
        <taxon>Bacteria</taxon>
        <taxon>Pseudomonadati</taxon>
        <taxon>Pseudomonadota</taxon>
        <taxon>Gammaproteobacteria</taxon>
        <taxon>Moraxellales</taxon>
        <taxon>Moraxellaceae</taxon>
        <taxon>Acinetobacter</taxon>
        <taxon>Acinetobacter calcoaceticus/baumannii complex</taxon>
    </lineage>
</organism>
<feature type="chain" id="PRO_1000139082" description="Uracil phosphoribosyltransferase">
    <location>
        <begin position="1"/>
        <end position="211"/>
    </location>
</feature>
<feature type="binding site" evidence="1">
    <location>
        <position position="78"/>
    </location>
    <ligand>
        <name>5-phospho-alpha-D-ribose 1-diphosphate</name>
        <dbReference type="ChEBI" id="CHEBI:58017"/>
    </ligand>
</feature>
<feature type="binding site" evidence="1">
    <location>
        <position position="103"/>
    </location>
    <ligand>
        <name>5-phospho-alpha-D-ribose 1-diphosphate</name>
        <dbReference type="ChEBI" id="CHEBI:58017"/>
    </ligand>
</feature>
<feature type="binding site" evidence="1">
    <location>
        <begin position="130"/>
        <end position="138"/>
    </location>
    <ligand>
        <name>5-phospho-alpha-D-ribose 1-diphosphate</name>
        <dbReference type="ChEBI" id="CHEBI:58017"/>
    </ligand>
</feature>
<feature type="binding site" evidence="1">
    <location>
        <position position="193"/>
    </location>
    <ligand>
        <name>uracil</name>
        <dbReference type="ChEBI" id="CHEBI:17568"/>
    </ligand>
</feature>
<feature type="binding site" evidence="1">
    <location>
        <begin position="198"/>
        <end position="200"/>
    </location>
    <ligand>
        <name>uracil</name>
        <dbReference type="ChEBI" id="CHEBI:17568"/>
    </ligand>
</feature>
<feature type="binding site" evidence="1">
    <location>
        <position position="199"/>
    </location>
    <ligand>
        <name>5-phospho-alpha-D-ribose 1-diphosphate</name>
        <dbReference type="ChEBI" id="CHEBI:58017"/>
    </ligand>
</feature>
<dbReference type="EC" id="2.4.2.9" evidence="1"/>
<dbReference type="EMBL" id="CP001172">
    <property type="protein sequence ID" value="ACJ57326.1"/>
    <property type="molecule type" value="Genomic_DNA"/>
</dbReference>
<dbReference type="RefSeq" id="WP_001007343.1">
    <property type="nucleotide sequence ID" value="NZ_CP001172.1"/>
</dbReference>
<dbReference type="SMR" id="B7GZA8"/>
<dbReference type="GeneID" id="92892695"/>
<dbReference type="HOGENOM" id="CLU_067096_2_2_6"/>
<dbReference type="UniPathway" id="UPA00574">
    <property type="reaction ID" value="UER00636"/>
</dbReference>
<dbReference type="Proteomes" id="UP000006924">
    <property type="component" value="Chromosome"/>
</dbReference>
<dbReference type="GO" id="GO:0005525">
    <property type="term" value="F:GTP binding"/>
    <property type="evidence" value="ECO:0007669"/>
    <property type="project" value="UniProtKB-KW"/>
</dbReference>
<dbReference type="GO" id="GO:0000287">
    <property type="term" value="F:magnesium ion binding"/>
    <property type="evidence" value="ECO:0007669"/>
    <property type="project" value="UniProtKB-UniRule"/>
</dbReference>
<dbReference type="GO" id="GO:0004845">
    <property type="term" value="F:uracil phosphoribosyltransferase activity"/>
    <property type="evidence" value="ECO:0007669"/>
    <property type="project" value="UniProtKB-UniRule"/>
</dbReference>
<dbReference type="GO" id="GO:0044206">
    <property type="term" value="P:UMP salvage"/>
    <property type="evidence" value="ECO:0007669"/>
    <property type="project" value="UniProtKB-UniRule"/>
</dbReference>
<dbReference type="GO" id="GO:0006223">
    <property type="term" value="P:uracil salvage"/>
    <property type="evidence" value="ECO:0007669"/>
    <property type="project" value="InterPro"/>
</dbReference>
<dbReference type="CDD" id="cd06223">
    <property type="entry name" value="PRTases_typeI"/>
    <property type="match status" value="1"/>
</dbReference>
<dbReference type="FunFam" id="3.40.50.2020:FF:000003">
    <property type="entry name" value="Uracil phosphoribosyltransferase"/>
    <property type="match status" value="1"/>
</dbReference>
<dbReference type="Gene3D" id="3.40.50.2020">
    <property type="match status" value="1"/>
</dbReference>
<dbReference type="HAMAP" id="MF_01218_B">
    <property type="entry name" value="Upp_B"/>
    <property type="match status" value="1"/>
</dbReference>
<dbReference type="InterPro" id="IPR000836">
    <property type="entry name" value="PRibTrfase_dom"/>
</dbReference>
<dbReference type="InterPro" id="IPR029057">
    <property type="entry name" value="PRTase-like"/>
</dbReference>
<dbReference type="InterPro" id="IPR034332">
    <property type="entry name" value="Upp_B"/>
</dbReference>
<dbReference type="InterPro" id="IPR050054">
    <property type="entry name" value="UPRTase/APRTase"/>
</dbReference>
<dbReference type="InterPro" id="IPR005765">
    <property type="entry name" value="Ura_phspho_trans"/>
</dbReference>
<dbReference type="NCBIfam" id="NF001097">
    <property type="entry name" value="PRK00129.1"/>
    <property type="match status" value="1"/>
</dbReference>
<dbReference type="NCBIfam" id="TIGR01091">
    <property type="entry name" value="upp"/>
    <property type="match status" value="1"/>
</dbReference>
<dbReference type="PANTHER" id="PTHR32315">
    <property type="entry name" value="ADENINE PHOSPHORIBOSYLTRANSFERASE"/>
    <property type="match status" value="1"/>
</dbReference>
<dbReference type="PANTHER" id="PTHR32315:SF4">
    <property type="entry name" value="URACIL PHOSPHORIBOSYLTRANSFERASE, CHLOROPLASTIC"/>
    <property type="match status" value="1"/>
</dbReference>
<dbReference type="Pfam" id="PF14681">
    <property type="entry name" value="UPRTase"/>
    <property type="match status" value="1"/>
</dbReference>
<dbReference type="SUPFAM" id="SSF53271">
    <property type="entry name" value="PRTase-like"/>
    <property type="match status" value="1"/>
</dbReference>
<keyword id="KW-0021">Allosteric enzyme</keyword>
<keyword id="KW-0328">Glycosyltransferase</keyword>
<keyword id="KW-0342">GTP-binding</keyword>
<keyword id="KW-0460">Magnesium</keyword>
<keyword id="KW-0547">Nucleotide-binding</keyword>
<keyword id="KW-0808">Transferase</keyword>
<evidence type="ECO:0000255" key="1">
    <source>
        <dbReference type="HAMAP-Rule" id="MF_01218"/>
    </source>
</evidence>
<accession>B7GZA8</accession>
<sequence>MAIQEIRHPLIRHKLGLLRRADISTKNFRELAQEVTMLLTYEATKDLPVVDCEIEGWAGNVTTQRIAGKKITIVPILRAGIGMLDGVLNLIPSAKVSVLGLERDEATLEVRTYYKKLVPDVANRIAMIIDPMLATGNSLVAAIDVLKASGCKDIRVMVLVAAPEGIAKVEAAHPDIQLYTASIDNGLNEHGYIVPGLGDAGDKIFGSVQKD</sequence>
<protein>
    <recommendedName>
        <fullName evidence="1">Uracil phosphoribosyltransferase</fullName>
        <ecNumber evidence="1">2.4.2.9</ecNumber>
    </recommendedName>
    <alternativeName>
        <fullName evidence="1">UMP pyrophosphorylase</fullName>
    </alternativeName>
    <alternativeName>
        <fullName evidence="1">UPRTase</fullName>
    </alternativeName>
</protein>
<name>UPP_ACIB3</name>
<proteinExistence type="inferred from homology"/>
<reference key="1">
    <citation type="journal article" date="2008" name="J. Bacteriol.">
        <title>Comparative genome sequence analysis of multidrug-resistant Acinetobacter baumannii.</title>
        <authorList>
            <person name="Adams M.D."/>
            <person name="Goglin K."/>
            <person name="Molyneaux N."/>
            <person name="Hujer K.M."/>
            <person name="Lavender H."/>
            <person name="Jamison J.J."/>
            <person name="MacDonald I.J."/>
            <person name="Martin K.M."/>
            <person name="Russo T."/>
            <person name="Campagnari A.A."/>
            <person name="Hujer A.M."/>
            <person name="Bonomo R.A."/>
            <person name="Gill S.R."/>
        </authorList>
    </citation>
    <scope>NUCLEOTIDE SEQUENCE [LARGE SCALE GENOMIC DNA]</scope>
    <source>
        <strain>AB307-0294</strain>
    </source>
</reference>